<evidence type="ECO:0000255" key="1">
    <source>
        <dbReference type="HAMAP-Rule" id="MF_00134"/>
    </source>
</evidence>
<organism>
    <name type="scientific">Leptospira interrogans serogroup Icterohaemorrhagiae serovar copenhageni (strain Fiocruz L1-130)</name>
    <dbReference type="NCBI Taxonomy" id="267671"/>
    <lineage>
        <taxon>Bacteria</taxon>
        <taxon>Pseudomonadati</taxon>
        <taxon>Spirochaetota</taxon>
        <taxon>Spirochaetia</taxon>
        <taxon>Leptospirales</taxon>
        <taxon>Leptospiraceae</taxon>
        <taxon>Leptospira</taxon>
    </lineage>
</organism>
<name>TRPC_LEPIC</name>
<proteinExistence type="inferred from homology"/>
<reference key="1">
    <citation type="journal article" date="2004" name="J. Bacteriol.">
        <title>Comparative genomics of two Leptospira interrogans serovars reveals novel insights into physiology and pathogenesis.</title>
        <authorList>
            <person name="Nascimento A.L.T.O."/>
            <person name="Ko A.I."/>
            <person name="Martins E.A.L."/>
            <person name="Monteiro-Vitorello C.B."/>
            <person name="Ho P.L."/>
            <person name="Haake D.A."/>
            <person name="Verjovski-Almeida S."/>
            <person name="Hartskeerl R.A."/>
            <person name="Marques M.V."/>
            <person name="Oliveira M.C."/>
            <person name="Menck C.F.M."/>
            <person name="Leite L.C.C."/>
            <person name="Carrer H."/>
            <person name="Coutinho L.L."/>
            <person name="Degrave W.M."/>
            <person name="Dellagostin O.A."/>
            <person name="El-Dorry H."/>
            <person name="Ferro E.S."/>
            <person name="Ferro M.I.T."/>
            <person name="Furlan L.R."/>
            <person name="Gamberini M."/>
            <person name="Giglioti E.A."/>
            <person name="Goes-Neto A."/>
            <person name="Goldman G.H."/>
            <person name="Goldman M.H.S."/>
            <person name="Harakava R."/>
            <person name="Jeronimo S.M.B."/>
            <person name="Junqueira-de-Azevedo I.L.M."/>
            <person name="Kimura E.T."/>
            <person name="Kuramae E.E."/>
            <person name="Lemos E.G.M."/>
            <person name="Lemos M.V.F."/>
            <person name="Marino C.L."/>
            <person name="Nunes L.R."/>
            <person name="de Oliveira R.C."/>
            <person name="Pereira G.G."/>
            <person name="Reis M.S."/>
            <person name="Schriefer A."/>
            <person name="Siqueira W.J."/>
            <person name="Sommer P."/>
            <person name="Tsai S.M."/>
            <person name="Simpson A.J.G."/>
            <person name="Ferro J.A."/>
            <person name="Camargo L.E.A."/>
            <person name="Kitajima J.P."/>
            <person name="Setubal J.C."/>
            <person name="Van Sluys M.A."/>
        </authorList>
    </citation>
    <scope>NUCLEOTIDE SEQUENCE [LARGE SCALE GENOMIC DNA]</scope>
    <source>
        <strain>Fiocruz L1-130</strain>
    </source>
</reference>
<dbReference type="EC" id="4.1.1.48" evidence="1"/>
<dbReference type="EMBL" id="AE016823">
    <property type="protein sequence ID" value="AAS71340.1"/>
    <property type="molecule type" value="Genomic_DNA"/>
</dbReference>
<dbReference type="RefSeq" id="WP_000099241.1">
    <property type="nucleotide sequence ID" value="NC_005823.1"/>
</dbReference>
<dbReference type="SMR" id="Q72NP6"/>
<dbReference type="KEGG" id="lic:LIC_12786"/>
<dbReference type="HOGENOM" id="CLU_034247_0_1_12"/>
<dbReference type="UniPathway" id="UPA00035">
    <property type="reaction ID" value="UER00043"/>
</dbReference>
<dbReference type="Proteomes" id="UP000007037">
    <property type="component" value="Chromosome I"/>
</dbReference>
<dbReference type="GO" id="GO:0004425">
    <property type="term" value="F:indole-3-glycerol-phosphate synthase activity"/>
    <property type="evidence" value="ECO:0007669"/>
    <property type="project" value="UniProtKB-UniRule"/>
</dbReference>
<dbReference type="GO" id="GO:0004640">
    <property type="term" value="F:phosphoribosylanthranilate isomerase activity"/>
    <property type="evidence" value="ECO:0007669"/>
    <property type="project" value="TreeGrafter"/>
</dbReference>
<dbReference type="GO" id="GO:0000162">
    <property type="term" value="P:L-tryptophan biosynthetic process"/>
    <property type="evidence" value="ECO:0007669"/>
    <property type="project" value="UniProtKB-UniRule"/>
</dbReference>
<dbReference type="CDD" id="cd00331">
    <property type="entry name" value="IGPS"/>
    <property type="match status" value="1"/>
</dbReference>
<dbReference type="FunFam" id="3.20.20.70:FF:000024">
    <property type="entry name" value="Indole-3-glycerol phosphate synthase"/>
    <property type="match status" value="1"/>
</dbReference>
<dbReference type="Gene3D" id="3.20.20.70">
    <property type="entry name" value="Aldolase class I"/>
    <property type="match status" value="1"/>
</dbReference>
<dbReference type="HAMAP" id="MF_00134_B">
    <property type="entry name" value="IGPS_B"/>
    <property type="match status" value="1"/>
</dbReference>
<dbReference type="InterPro" id="IPR013785">
    <property type="entry name" value="Aldolase_TIM"/>
</dbReference>
<dbReference type="InterPro" id="IPR045186">
    <property type="entry name" value="Indole-3-glycerol_P_synth"/>
</dbReference>
<dbReference type="InterPro" id="IPR013798">
    <property type="entry name" value="Indole-3-glycerol_P_synth_dom"/>
</dbReference>
<dbReference type="InterPro" id="IPR001468">
    <property type="entry name" value="Indole-3-GlycerolPSynthase_CS"/>
</dbReference>
<dbReference type="InterPro" id="IPR011060">
    <property type="entry name" value="RibuloseP-bd_barrel"/>
</dbReference>
<dbReference type="NCBIfam" id="NF001377">
    <property type="entry name" value="PRK00278.2-4"/>
    <property type="match status" value="1"/>
</dbReference>
<dbReference type="NCBIfam" id="NF010562">
    <property type="entry name" value="PRK13957.1"/>
    <property type="match status" value="1"/>
</dbReference>
<dbReference type="PANTHER" id="PTHR22854:SF2">
    <property type="entry name" value="INDOLE-3-GLYCEROL-PHOSPHATE SYNTHASE"/>
    <property type="match status" value="1"/>
</dbReference>
<dbReference type="PANTHER" id="PTHR22854">
    <property type="entry name" value="TRYPTOPHAN BIOSYNTHESIS PROTEIN"/>
    <property type="match status" value="1"/>
</dbReference>
<dbReference type="Pfam" id="PF00218">
    <property type="entry name" value="IGPS"/>
    <property type="match status" value="1"/>
</dbReference>
<dbReference type="SUPFAM" id="SSF51366">
    <property type="entry name" value="Ribulose-phoshate binding barrel"/>
    <property type="match status" value="1"/>
</dbReference>
<dbReference type="PROSITE" id="PS00614">
    <property type="entry name" value="IGPS"/>
    <property type="match status" value="1"/>
</dbReference>
<protein>
    <recommendedName>
        <fullName evidence="1">Indole-3-glycerol phosphate synthase</fullName>
        <shortName evidence="1">IGPS</shortName>
        <ecNumber evidence="1">4.1.1.48</ecNumber>
    </recommendedName>
</protein>
<gene>
    <name evidence="1" type="primary">trpC</name>
    <name type="ordered locus">LIC_12786</name>
</gene>
<feature type="chain" id="PRO_0000154228" description="Indole-3-glycerol phosphate synthase">
    <location>
        <begin position="1"/>
        <end position="252"/>
    </location>
</feature>
<accession>Q72NP6</accession>
<comment type="catalytic activity">
    <reaction evidence="1">
        <text>1-(2-carboxyphenylamino)-1-deoxy-D-ribulose 5-phosphate + H(+) = (1S,2R)-1-C-(indol-3-yl)glycerol 3-phosphate + CO2 + H2O</text>
        <dbReference type="Rhea" id="RHEA:23476"/>
        <dbReference type="ChEBI" id="CHEBI:15377"/>
        <dbReference type="ChEBI" id="CHEBI:15378"/>
        <dbReference type="ChEBI" id="CHEBI:16526"/>
        <dbReference type="ChEBI" id="CHEBI:58613"/>
        <dbReference type="ChEBI" id="CHEBI:58866"/>
        <dbReference type="EC" id="4.1.1.48"/>
    </reaction>
</comment>
<comment type="pathway">
    <text evidence="1">Amino-acid biosynthesis; L-tryptophan biosynthesis; L-tryptophan from chorismate: step 4/5.</text>
</comment>
<comment type="similarity">
    <text evidence="1">Belongs to the TrpC family.</text>
</comment>
<sequence length="252" mass="28229">MSSSQPHRVLREIISTKQNEIKKISAWDPLPHRGLSLRDSLKSRTFSIIAECKRKSPSAGELRADYRPVQIAKTYEELGASAISVLTDQNYFGGSLEDLKDVSSELKIPVLRKDFILDEIQIREARAFGASAILLIVRILTPEQIKSFLKLASSLGMDCLVEVHTSDEAKLALDCGAEIIGINTRDLDTFQIHQNLVEEVSAFLPPNIVKVGESGIKKRSDLDTFRKLVDAALIGTYFMEKQDIRKAWLNLF</sequence>
<keyword id="KW-0028">Amino-acid biosynthesis</keyword>
<keyword id="KW-0057">Aromatic amino acid biosynthesis</keyword>
<keyword id="KW-0210">Decarboxylase</keyword>
<keyword id="KW-0456">Lyase</keyword>
<keyword id="KW-0822">Tryptophan biosynthesis</keyword>